<dbReference type="EMBL" id="CM001232">
    <property type="protein sequence ID" value="EHA55525.1"/>
    <property type="molecule type" value="Genomic_DNA"/>
</dbReference>
<dbReference type="RefSeq" id="XP_003715332.1">
    <property type="nucleotide sequence ID" value="XM_003715284.1"/>
</dbReference>
<dbReference type="SMR" id="G4MT60"/>
<dbReference type="FunCoup" id="G4MT60">
    <property type="interactions" value="836"/>
</dbReference>
<dbReference type="STRING" id="242507.G4MT60"/>
<dbReference type="EnsemblFungi" id="MGG_07137T0">
    <property type="protein sequence ID" value="MGG_07137T0"/>
    <property type="gene ID" value="MGG_07137"/>
</dbReference>
<dbReference type="GeneID" id="2683259"/>
<dbReference type="KEGG" id="mgr:MGG_07137"/>
<dbReference type="VEuPathDB" id="FungiDB:MGG_07137"/>
<dbReference type="eggNOG" id="KOG1439">
    <property type="taxonomic scope" value="Eukaryota"/>
</dbReference>
<dbReference type="HOGENOM" id="CLU_021695_0_1_1"/>
<dbReference type="InParanoid" id="G4MT60"/>
<dbReference type="OMA" id="FETKAKM"/>
<dbReference type="OrthoDB" id="9446342at2759"/>
<dbReference type="Proteomes" id="UP000009058">
    <property type="component" value="Chromosome 2"/>
</dbReference>
<dbReference type="GO" id="GO:0005737">
    <property type="term" value="C:cytoplasm"/>
    <property type="evidence" value="ECO:0007669"/>
    <property type="project" value="TreeGrafter"/>
</dbReference>
<dbReference type="GO" id="GO:0005096">
    <property type="term" value="F:GTPase activator activity"/>
    <property type="evidence" value="ECO:0007669"/>
    <property type="project" value="UniProtKB-KW"/>
</dbReference>
<dbReference type="GO" id="GO:0005093">
    <property type="term" value="F:Rab GDP-dissociation inhibitor activity"/>
    <property type="evidence" value="ECO:0007669"/>
    <property type="project" value="InterPro"/>
</dbReference>
<dbReference type="GO" id="GO:0015031">
    <property type="term" value="P:protein transport"/>
    <property type="evidence" value="ECO:0007669"/>
    <property type="project" value="InterPro"/>
</dbReference>
<dbReference type="GO" id="GO:0007264">
    <property type="term" value="P:small GTPase-mediated signal transduction"/>
    <property type="evidence" value="ECO:0007669"/>
    <property type="project" value="InterPro"/>
</dbReference>
<dbReference type="GO" id="GO:0016192">
    <property type="term" value="P:vesicle-mediated transport"/>
    <property type="evidence" value="ECO:0007669"/>
    <property type="project" value="TreeGrafter"/>
</dbReference>
<dbReference type="FunFam" id="1.10.405.10:FF:000001">
    <property type="entry name" value="Rab GDP dissociation inhibitor"/>
    <property type="match status" value="1"/>
</dbReference>
<dbReference type="Gene3D" id="3.50.50.60">
    <property type="entry name" value="FAD/NAD(P)-binding domain"/>
    <property type="match status" value="1"/>
</dbReference>
<dbReference type="Gene3D" id="1.10.405.10">
    <property type="entry name" value="Guanine Nucleotide Dissociation Inhibitor, domain 1"/>
    <property type="match status" value="1"/>
</dbReference>
<dbReference type="Gene3D" id="3.30.519.10">
    <property type="entry name" value="Guanine Nucleotide Dissociation Inhibitor, domain 2"/>
    <property type="match status" value="1"/>
</dbReference>
<dbReference type="InterPro" id="IPR036188">
    <property type="entry name" value="FAD/NAD-bd_sf"/>
</dbReference>
<dbReference type="InterPro" id="IPR018203">
    <property type="entry name" value="GDP_dissociation_inhibitor"/>
</dbReference>
<dbReference type="InterPro" id="IPR000806">
    <property type="entry name" value="RabGDI"/>
</dbReference>
<dbReference type="PANTHER" id="PTHR11787:SF8">
    <property type="entry name" value="RAB GDP DISSOCIATION INHIBITOR"/>
    <property type="match status" value="1"/>
</dbReference>
<dbReference type="PANTHER" id="PTHR11787">
    <property type="entry name" value="RAB GDP-DISSOCIATION INHIBITOR"/>
    <property type="match status" value="1"/>
</dbReference>
<dbReference type="Pfam" id="PF00996">
    <property type="entry name" value="GDI"/>
    <property type="match status" value="1"/>
</dbReference>
<dbReference type="PRINTS" id="PR00892">
    <property type="entry name" value="RABGDI"/>
</dbReference>
<dbReference type="PRINTS" id="PR00891">
    <property type="entry name" value="RABGDIREP"/>
</dbReference>
<dbReference type="SUPFAM" id="SSF51905">
    <property type="entry name" value="FAD/NAD(P)-binding domain"/>
    <property type="match status" value="2"/>
</dbReference>
<evidence type="ECO:0000269" key="1">
    <source>
    </source>
</evidence>
<evidence type="ECO:0000305" key="2"/>
<reference key="1">
    <citation type="journal article" date="2005" name="Nature">
        <title>The genome sequence of the rice blast fungus Magnaporthe grisea.</title>
        <authorList>
            <person name="Dean R.A."/>
            <person name="Talbot N.J."/>
            <person name="Ebbole D.J."/>
            <person name="Farman M.L."/>
            <person name="Mitchell T.K."/>
            <person name="Orbach M.J."/>
            <person name="Thon M.R."/>
            <person name="Kulkarni R."/>
            <person name="Xu J.-R."/>
            <person name="Pan H."/>
            <person name="Read N.D."/>
            <person name="Lee Y.-H."/>
            <person name="Carbone I."/>
            <person name="Brown D."/>
            <person name="Oh Y.Y."/>
            <person name="Donofrio N."/>
            <person name="Jeong J.S."/>
            <person name="Soanes D.M."/>
            <person name="Djonovic S."/>
            <person name="Kolomiets E."/>
            <person name="Rehmeyer C."/>
            <person name="Li W."/>
            <person name="Harding M."/>
            <person name="Kim S."/>
            <person name="Lebrun M.-H."/>
            <person name="Bohnert H."/>
            <person name="Coughlan S."/>
            <person name="Butler J."/>
            <person name="Calvo S.E."/>
            <person name="Ma L.-J."/>
            <person name="Nicol R."/>
            <person name="Purcell S."/>
            <person name="Nusbaum C."/>
            <person name="Galagan J.E."/>
            <person name="Birren B.W."/>
        </authorList>
    </citation>
    <scope>NUCLEOTIDE SEQUENCE [LARGE SCALE GENOMIC DNA]</scope>
    <source>
        <strain>70-15 / ATCC MYA-4617 / FGSC 8958</strain>
    </source>
</reference>
<reference key="2">
    <citation type="journal article" date="2018" name="J. Zhejiang Univ. Sci. B">
        <title>Physical interactions and mutational analysis of MoYpt7 in Magnaporthe oryzae.</title>
        <authorList>
            <person name="Huang L.Y."/>
            <person name="Wu M."/>
            <person name="Yu X.Y."/>
            <person name="Li L."/>
            <person name="Lin F.C."/>
            <person name="Liu X.H."/>
        </authorList>
    </citation>
    <scope>INTERACTION WITH YPT7</scope>
    <scope>IDENTIFICATION BY MASS SPECTROMETRY</scope>
</reference>
<protein>
    <recommendedName>
        <fullName>Rab GDP-dissociation inhibitor</fullName>
        <shortName>Rab GDI</shortName>
    </recommendedName>
</protein>
<name>GDI1_PYRO7</name>
<accession>G4MT60</accession>
<organism>
    <name type="scientific">Pyricularia oryzae (strain 70-15 / ATCC MYA-4617 / FGSC 8958)</name>
    <name type="common">Rice blast fungus</name>
    <name type="synonym">Magnaporthe oryzae</name>
    <dbReference type="NCBI Taxonomy" id="242507"/>
    <lineage>
        <taxon>Eukaryota</taxon>
        <taxon>Fungi</taxon>
        <taxon>Dikarya</taxon>
        <taxon>Ascomycota</taxon>
        <taxon>Pezizomycotina</taxon>
        <taxon>Sordariomycetes</taxon>
        <taxon>Sordariomycetidae</taxon>
        <taxon>Magnaporthales</taxon>
        <taxon>Pyriculariaceae</taxon>
        <taxon>Pyricularia</taxon>
    </lineage>
</organism>
<sequence length="464" mass="50928">MEEIAKEYDVIVLGTGLTECILSGVLSVKGKKVLHIDRNDHYGGEAASLNLQALFKKYGNYNSGEEPWAKYGRNTDWNIDLVPKFLMSSGELTNILVSTDVTRYLEFKQVAGSFVQQGSGPKATVAKVPSDAAEALRSPLMGIFEKRRMKSFIEWVGTFDLKDPATHKGLDLSSCTMKDVYDKFGLETGTKDFIGHAMALYLSDDYISKPGGAPEAIDRIRLYGNSVARYGKSPYIYPLFGLGDLPQGFARLSAIYGGTYMLNTNIDELLYEDGKAVGIKATMTGIEPEMKFETRAKMILGDPSYFSDKVKVVGHVLRAICVLKHPLAGTSDADSCQLIIPQSQVGRKNDIYIACVSSAHSVCPKGYYIAIVSTIAETSANHHLELQPGLERLGKIEEQFMGPPIPLYAPIEDGTSSGIFISKSYDATSHFETTTDDVKDIYRRATGEELKVEGLRDLQVAGDE</sequence>
<gene>
    <name type="primary">GDI1</name>
    <name type="ORF">MGG_07137</name>
</gene>
<feature type="chain" id="PRO_0000451054" description="Rab GDP-dissociation inhibitor">
    <location>
        <begin position="1"/>
        <end position="464"/>
    </location>
</feature>
<keyword id="KW-0343">GTPase activation</keyword>
<keyword id="KW-1185">Reference proteome</keyword>
<comment type="function">
    <text evidence="1">Regulates the GDP/GTP exchange reaction of YPT7 by inhibiting the dissociation of GDP from it, and the subsequent binding of GTP to YTP7.</text>
</comment>
<comment type="subunit">
    <text evidence="1">Interacts with the GDP-bound form of Rab GTPase YPT7.</text>
</comment>
<comment type="similarity">
    <text evidence="2">Belongs to the Rab GDI family.</text>
</comment>
<proteinExistence type="evidence at protein level"/>